<organism>
    <name type="scientific">Yersinia pestis (strain Pestoides F)</name>
    <dbReference type="NCBI Taxonomy" id="386656"/>
    <lineage>
        <taxon>Bacteria</taxon>
        <taxon>Pseudomonadati</taxon>
        <taxon>Pseudomonadota</taxon>
        <taxon>Gammaproteobacteria</taxon>
        <taxon>Enterobacterales</taxon>
        <taxon>Yersiniaceae</taxon>
        <taxon>Yersinia</taxon>
    </lineage>
</organism>
<accession>A4TRP0</accession>
<reference key="1">
    <citation type="submission" date="2007-02" db="EMBL/GenBank/DDBJ databases">
        <title>Complete sequence of chromosome of Yersinia pestis Pestoides F.</title>
        <authorList>
            <consortium name="US DOE Joint Genome Institute"/>
            <person name="Copeland A."/>
            <person name="Lucas S."/>
            <person name="Lapidus A."/>
            <person name="Barry K."/>
            <person name="Detter J.C."/>
            <person name="Glavina del Rio T."/>
            <person name="Hammon N."/>
            <person name="Israni S."/>
            <person name="Dalin E."/>
            <person name="Tice H."/>
            <person name="Pitluck S."/>
            <person name="Di Bartolo G."/>
            <person name="Chain P."/>
            <person name="Malfatti S."/>
            <person name="Shin M."/>
            <person name="Vergez L."/>
            <person name="Schmutz J."/>
            <person name="Larimer F."/>
            <person name="Land M."/>
            <person name="Hauser L."/>
            <person name="Worsham P."/>
            <person name="Chu M."/>
            <person name="Bearden S."/>
            <person name="Garcia E."/>
            <person name="Richardson P."/>
        </authorList>
    </citation>
    <scope>NUCLEOTIDE SEQUENCE [LARGE SCALE GENOMIC DNA]</scope>
    <source>
        <strain>Pestoides F</strain>
    </source>
</reference>
<name>MIAA_YERPP</name>
<protein>
    <recommendedName>
        <fullName evidence="1">tRNA dimethylallyltransferase</fullName>
        <ecNumber evidence="1">2.5.1.75</ecNumber>
    </recommendedName>
    <alternativeName>
        <fullName evidence="1">Dimethylallyl diphosphate:tRNA dimethylallyltransferase</fullName>
        <shortName evidence="1">DMAPP:tRNA dimethylallyltransferase</shortName>
        <shortName evidence="1">DMATase</shortName>
    </alternativeName>
    <alternativeName>
        <fullName evidence="1">Isopentenyl-diphosphate:tRNA isopentenyltransferase</fullName>
        <shortName evidence="1">IPP transferase</shortName>
        <shortName evidence="1">IPPT</shortName>
        <shortName evidence="1">IPTase</shortName>
    </alternativeName>
</protein>
<evidence type="ECO:0000255" key="1">
    <source>
        <dbReference type="HAMAP-Rule" id="MF_00185"/>
    </source>
</evidence>
<proteinExistence type="inferred from homology"/>
<sequence length="313" mass="34785">MNDIENLDRPPAIFIMGPTASGKTALSIALRQRLPVELVSVDSALIYRGMDIGTAKPSAQELALAPHRLIDIRDPAESYSAADFRKDALKEMADITAAGRIPLLVGGTMLYFKALLDGLSPLPSADPQVRQRIEQQASELGWGALHQQLAVIDPVAAARIHPNDPQRLSRALEVFFISGKTLTELTKISGETLPYRVHQFAIAPASRELLHQRIELRFHQMLDAGFEAEARVLFDRGDLHTDLPAIRCVGYRQMWSYLSGEIDYNDMVYRGVCATRQLAKRQMTWLRGWSSVQWLDSDKPGEALDSVIQVVSA</sequence>
<comment type="function">
    <text evidence="1">Catalyzes the transfer of a dimethylallyl group onto the adenine at position 37 in tRNAs that read codons beginning with uridine, leading to the formation of N6-(dimethylallyl)adenosine (i(6)A).</text>
</comment>
<comment type="catalytic activity">
    <reaction evidence="1">
        <text>adenosine(37) in tRNA + dimethylallyl diphosphate = N(6)-dimethylallyladenosine(37) in tRNA + diphosphate</text>
        <dbReference type="Rhea" id="RHEA:26482"/>
        <dbReference type="Rhea" id="RHEA-COMP:10162"/>
        <dbReference type="Rhea" id="RHEA-COMP:10375"/>
        <dbReference type="ChEBI" id="CHEBI:33019"/>
        <dbReference type="ChEBI" id="CHEBI:57623"/>
        <dbReference type="ChEBI" id="CHEBI:74411"/>
        <dbReference type="ChEBI" id="CHEBI:74415"/>
        <dbReference type="EC" id="2.5.1.75"/>
    </reaction>
</comment>
<comment type="cofactor">
    <cofactor evidence="1">
        <name>Mg(2+)</name>
        <dbReference type="ChEBI" id="CHEBI:18420"/>
    </cofactor>
</comment>
<comment type="subunit">
    <text evidence="1">Monomer.</text>
</comment>
<comment type="similarity">
    <text evidence="1">Belongs to the IPP transferase family.</text>
</comment>
<feature type="chain" id="PRO_1000020690" description="tRNA dimethylallyltransferase">
    <location>
        <begin position="1"/>
        <end position="313"/>
    </location>
</feature>
<feature type="region of interest" description="Interaction with substrate tRNA" evidence="1">
    <location>
        <begin position="42"/>
        <end position="45"/>
    </location>
</feature>
<feature type="region of interest" description="Interaction with substrate tRNA" evidence="1">
    <location>
        <begin position="166"/>
        <end position="170"/>
    </location>
</feature>
<feature type="region of interest" description="Interaction with substrate tRNA" evidence="1">
    <location>
        <begin position="247"/>
        <end position="252"/>
    </location>
</feature>
<feature type="binding site" evidence="1">
    <location>
        <begin position="17"/>
        <end position="24"/>
    </location>
    <ligand>
        <name>ATP</name>
        <dbReference type="ChEBI" id="CHEBI:30616"/>
    </ligand>
</feature>
<feature type="binding site" evidence="1">
    <location>
        <begin position="19"/>
        <end position="24"/>
    </location>
    <ligand>
        <name>substrate</name>
    </ligand>
</feature>
<feature type="site" description="Interaction with substrate tRNA" evidence="1">
    <location>
        <position position="108"/>
    </location>
</feature>
<feature type="site" description="Interaction with substrate tRNA" evidence="1">
    <location>
        <position position="130"/>
    </location>
</feature>
<gene>
    <name evidence="1" type="primary">miaA</name>
    <name type="ordered locus">YPDSF_3602</name>
</gene>
<keyword id="KW-0067">ATP-binding</keyword>
<keyword id="KW-0460">Magnesium</keyword>
<keyword id="KW-0547">Nucleotide-binding</keyword>
<keyword id="KW-0808">Transferase</keyword>
<keyword id="KW-0819">tRNA processing</keyword>
<dbReference type="EC" id="2.5.1.75" evidence="1"/>
<dbReference type="EMBL" id="CP000668">
    <property type="protein sequence ID" value="ABP41952.1"/>
    <property type="molecule type" value="Genomic_DNA"/>
</dbReference>
<dbReference type="RefSeq" id="WP_002209149.1">
    <property type="nucleotide sequence ID" value="NZ_CP009715.1"/>
</dbReference>
<dbReference type="SMR" id="A4TRP0"/>
<dbReference type="GeneID" id="57974235"/>
<dbReference type="KEGG" id="ypp:YPDSF_3602"/>
<dbReference type="PATRIC" id="fig|386656.14.peg.262"/>
<dbReference type="GO" id="GO:0005524">
    <property type="term" value="F:ATP binding"/>
    <property type="evidence" value="ECO:0007669"/>
    <property type="project" value="UniProtKB-UniRule"/>
</dbReference>
<dbReference type="GO" id="GO:0052381">
    <property type="term" value="F:tRNA dimethylallyltransferase activity"/>
    <property type="evidence" value="ECO:0007669"/>
    <property type="project" value="UniProtKB-UniRule"/>
</dbReference>
<dbReference type="GO" id="GO:0006400">
    <property type="term" value="P:tRNA modification"/>
    <property type="evidence" value="ECO:0007669"/>
    <property type="project" value="TreeGrafter"/>
</dbReference>
<dbReference type="FunFam" id="1.10.20.140:FF:000001">
    <property type="entry name" value="tRNA dimethylallyltransferase"/>
    <property type="match status" value="1"/>
</dbReference>
<dbReference type="Gene3D" id="1.10.20.140">
    <property type="match status" value="1"/>
</dbReference>
<dbReference type="Gene3D" id="3.40.50.300">
    <property type="entry name" value="P-loop containing nucleotide triphosphate hydrolases"/>
    <property type="match status" value="1"/>
</dbReference>
<dbReference type="HAMAP" id="MF_00185">
    <property type="entry name" value="IPP_trans"/>
    <property type="match status" value="1"/>
</dbReference>
<dbReference type="InterPro" id="IPR039657">
    <property type="entry name" value="Dimethylallyltransferase"/>
</dbReference>
<dbReference type="InterPro" id="IPR018022">
    <property type="entry name" value="IPT"/>
</dbReference>
<dbReference type="InterPro" id="IPR027417">
    <property type="entry name" value="P-loop_NTPase"/>
</dbReference>
<dbReference type="NCBIfam" id="TIGR00174">
    <property type="entry name" value="miaA"/>
    <property type="match status" value="1"/>
</dbReference>
<dbReference type="PANTHER" id="PTHR11088">
    <property type="entry name" value="TRNA DIMETHYLALLYLTRANSFERASE"/>
    <property type="match status" value="1"/>
</dbReference>
<dbReference type="PANTHER" id="PTHR11088:SF60">
    <property type="entry name" value="TRNA DIMETHYLALLYLTRANSFERASE"/>
    <property type="match status" value="1"/>
</dbReference>
<dbReference type="Pfam" id="PF01715">
    <property type="entry name" value="IPPT"/>
    <property type="match status" value="1"/>
</dbReference>
<dbReference type="SUPFAM" id="SSF52540">
    <property type="entry name" value="P-loop containing nucleoside triphosphate hydrolases"/>
    <property type="match status" value="1"/>
</dbReference>